<evidence type="ECO:0000250" key="1"/>
<evidence type="ECO:0000255" key="2"/>
<evidence type="ECO:0000305" key="3"/>
<organism>
    <name type="scientific">Halobacterium salinarum (strain ATCC 700922 / JCM 11081 / NRC-1)</name>
    <name type="common">Halobacterium halobium</name>
    <dbReference type="NCBI Taxonomy" id="64091"/>
    <lineage>
        <taxon>Archaea</taxon>
        <taxon>Methanobacteriati</taxon>
        <taxon>Methanobacteriota</taxon>
        <taxon>Stenosarchaea group</taxon>
        <taxon>Halobacteria</taxon>
        <taxon>Halobacteriales</taxon>
        <taxon>Halobacteriaceae</taxon>
        <taxon>Halobacterium</taxon>
        <taxon>Halobacterium salinarum NRC-34001</taxon>
    </lineage>
</organism>
<accession>Q9HQ63</accession>
<dbReference type="EMBL" id="AE004437">
    <property type="protein sequence ID" value="AAG19654.1"/>
    <property type="status" value="ALT_INIT"/>
    <property type="molecule type" value="Genomic_DNA"/>
</dbReference>
<dbReference type="PIR" id="B84286">
    <property type="entry name" value="B84286"/>
</dbReference>
<dbReference type="RefSeq" id="WP_012289306.1">
    <property type="nucleotide sequence ID" value="NC_002607.1"/>
</dbReference>
<dbReference type="SMR" id="Q9HQ63"/>
<dbReference type="STRING" id="64091.VNG_1310G"/>
<dbReference type="PaxDb" id="64091-VNG_1310G"/>
<dbReference type="GeneID" id="89349637"/>
<dbReference type="KEGG" id="hal:VNG_1310G"/>
<dbReference type="PATRIC" id="fig|64091.14.peg.1002"/>
<dbReference type="HOGENOM" id="CLU_127125_1_0_2"/>
<dbReference type="InParanoid" id="Q9HQ63"/>
<dbReference type="OrthoDB" id="21304at2157"/>
<dbReference type="PhylomeDB" id="Q9HQ63"/>
<dbReference type="UniPathway" id="UPA00223"/>
<dbReference type="Proteomes" id="UP000000554">
    <property type="component" value="Chromosome"/>
</dbReference>
<dbReference type="GO" id="GO:0005886">
    <property type="term" value="C:plasma membrane"/>
    <property type="evidence" value="ECO:0007669"/>
    <property type="project" value="UniProtKB-SubCell"/>
</dbReference>
<dbReference type="GO" id="GO:0009055">
    <property type="term" value="F:electron transfer activity"/>
    <property type="evidence" value="ECO:0007669"/>
    <property type="project" value="InterPro"/>
</dbReference>
<dbReference type="GO" id="GO:0046872">
    <property type="term" value="F:metal ion binding"/>
    <property type="evidence" value="ECO:0007669"/>
    <property type="project" value="UniProtKB-KW"/>
</dbReference>
<dbReference type="GO" id="GO:0006099">
    <property type="term" value="P:tricarboxylic acid cycle"/>
    <property type="evidence" value="ECO:0007669"/>
    <property type="project" value="UniProtKB-UniPathway"/>
</dbReference>
<dbReference type="CDD" id="cd03501">
    <property type="entry name" value="SQR_TypeA_SdhC_like"/>
    <property type="match status" value="1"/>
</dbReference>
<dbReference type="Gene3D" id="1.20.1300.10">
    <property type="entry name" value="Fumarate reductase/succinate dehydrogenase, transmembrane subunit"/>
    <property type="match status" value="1"/>
</dbReference>
<dbReference type="InterPro" id="IPR039023">
    <property type="entry name" value="SdhC_prok"/>
</dbReference>
<dbReference type="InterPro" id="IPR034804">
    <property type="entry name" value="SQR/QFR_C/D"/>
</dbReference>
<dbReference type="InterPro" id="IPR014314">
    <property type="entry name" value="Succ_DH_cytb556"/>
</dbReference>
<dbReference type="InterPro" id="IPR000701">
    <property type="entry name" value="SuccDH_FuR_B_TM-su"/>
</dbReference>
<dbReference type="NCBIfam" id="TIGR02970">
    <property type="entry name" value="succ_dehyd_cytB"/>
    <property type="match status" value="1"/>
</dbReference>
<dbReference type="PANTHER" id="PTHR41910">
    <property type="entry name" value="SUCCINATE DEHYDROGENASE 2 MEMBRANE SUBUNIT SDHC"/>
    <property type="match status" value="1"/>
</dbReference>
<dbReference type="PANTHER" id="PTHR41910:SF1">
    <property type="entry name" value="SUCCINATE DEHYDROGENASE HYDROPHOBIC MEMBRANE ANCHOR SUBUNIT"/>
    <property type="match status" value="1"/>
</dbReference>
<dbReference type="Pfam" id="PF01127">
    <property type="entry name" value="Sdh_cyt"/>
    <property type="match status" value="1"/>
</dbReference>
<dbReference type="SUPFAM" id="SSF81343">
    <property type="entry name" value="Fumarate reductase respiratory complex transmembrane subunits"/>
    <property type="match status" value="1"/>
</dbReference>
<keyword id="KW-1003">Cell membrane</keyword>
<keyword id="KW-0249">Electron transport</keyword>
<keyword id="KW-0349">Heme</keyword>
<keyword id="KW-0408">Iron</keyword>
<keyword id="KW-0472">Membrane</keyword>
<keyword id="KW-0479">Metal-binding</keyword>
<keyword id="KW-1185">Reference proteome</keyword>
<keyword id="KW-0812">Transmembrane</keyword>
<keyword id="KW-1133">Transmembrane helix</keyword>
<keyword id="KW-0813">Transport</keyword>
<keyword id="KW-0816">Tricarboxylic acid cycle</keyword>
<reference key="1">
    <citation type="journal article" date="2000" name="Proc. Natl. Acad. Sci. U.S.A.">
        <title>Genome sequence of Halobacterium species NRC-1.</title>
        <authorList>
            <person name="Ng W.V."/>
            <person name="Kennedy S.P."/>
            <person name="Mahairas G.G."/>
            <person name="Berquist B."/>
            <person name="Pan M."/>
            <person name="Shukla H.D."/>
            <person name="Lasky S.R."/>
            <person name="Baliga N.S."/>
            <person name="Thorsson V."/>
            <person name="Sbrogna J."/>
            <person name="Swartzell S."/>
            <person name="Weir D."/>
            <person name="Hall J."/>
            <person name="Dahl T.A."/>
            <person name="Welti R."/>
            <person name="Goo Y.A."/>
            <person name="Leithauser B."/>
            <person name="Keller K."/>
            <person name="Cruz R."/>
            <person name="Danson M.J."/>
            <person name="Hough D.W."/>
            <person name="Maddocks D.G."/>
            <person name="Jablonski P.E."/>
            <person name="Krebs M.P."/>
            <person name="Angevine C.M."/>
            <person name="Dale H."/>
            <person name="Isenbarger T.A."/>
            <person name="Peck R.F."/>
            <person name="Pohlschroder M."/>
            <person name="Spudich J.L."/>
            <person name="Jung K.-H."/>
            <person name="Alam M."/>
            <person name="Freitas T."/>
            <person name="Hou S."/>
            <person name="Daniels C.J."/>
            <person name="Dennis P.P."/>
            <person name="Omer A.D."/>
            <person name="Ebhardt H."/>
            <person name="Lowe T.M."/>
            <person name="Liang P."/>
            <person name="Riley M."/>
            <person name="Hood L."/>
            <person name="DasSarma S."/>
        </authorList>
    </citation>
    <scope>NUCLEOTIDE SEQUENCE [LARGE SCALE GENOMIC DNA]</scope>
    <source>
        <strain>ATCC 700922 / JCM 11081 / NRC-1</strain>
    </source>
</reference>
<name>DHSD_HALSA</name>
<feature type="chain" id="PRO_0000158680" description="Succinate dehydrogenase hydrophobic membrane anchor subunit">
    <location>
        <begin position="1"/>
        <end position="130"/>
    </location>
</feature>
<feature type="topological domain" description="Cytoplasmic" evidence="2">
    <location>
        <begin position="1"/>
        <end position="25"/>
    </location>
</feature>
<feature type="transmembrane region" description="Helical" evidence="2">
    <location>
        <begin position="26"/>
        <end position="46"/>
    </location>
</feature>
<feature type="topological domain" description="Periplasmic" evidence="2">
    <location>
        <begin position="47"/>
        <end position="71"/>
    </location>
</feature>
<feature type="transmembrane region" description="Helical" evidence="2">
    <location>
        <begin position="72"/>
        <end position="93"/>
    </location>
</feature>
<feature type="topological domain" description="Cytoplasmic" evidence="2">
    <location>
        <begin position="94"/>
        <end position="103"/>
    </location>
</feature>
<feature type="transmembrane region" description="Helical" evidence="2">
    <location>
        <begin position="104"/>
        <end position="128"/>
    </location>
</feature>
<feature type="binding site" description="axial binding residue" evidence="1">
    <location>
        <position position="84"/>
    </location>
    <ligand>
        <name>heme</name>
        <dbReference type="ChEBI" id="CHEBI:30413"/>
        <note>ligand shared with second transmembrane subunit</note>
    </ligand>
    <ligandPart>
        <name>Fe</name>
        <dbReference type="ChEBI" id="CHEBI:18248"/>
    </ligandPart>
</feature>
<sequence length="130" mass="14149">MSESYDRGLVADFGRWTEFSAGMWAWVFHKFTGWVLVGYLFTHISVLSTSLQGAQVYNSTLSGLESLAIVRLLEVGLLAVAVFHILNGIRLLFVDLGVGLEAQDKSFYASLVLTGVIVVASVPTFLTGAF</sequence>
<comment type="function">
    <text evidence="1">Membrane-anchoring subunit of succinate dehydrogenase (SDH).</text>
</comment>
<comment type="cofactor">
    <cofactor evidence="1">
        <name>heme</name>
        <dbReference type="ChEBI" id="CHEBI:30413"/>
    </cofactor>
    <text evidence="1">The heme is bound between the two transmembrane subunits.</text>
</comment>
<comment type="pathway">
    <text>Carbohydrate metabolism; tricarboxylic acid cycle.</text>
</comment>
<comment type="subunit">
    <text evidence="1">Part of an enzyme complex containing four subunits: a flavoprotein, an iron-sulfur protein, plus two membrane-anchoring proteins, SdhC and SdhD.</text>
</comment>
<comment type="subcellular location">
    <subcellularLocation>
        <location evidence="3">Cell membrane</location>
        <topology evidence="3">Multi-pass membrane protein</topology>
    </subcellularLocation>
</comment>
<comment type="sequence caution" evidence="3">
    <conflict type="erroneous initiation">
        <sequence resource="EMBL-CDS" id="AAG19654"/>
    </conflict>
</comment>
<gene>
    <name type="primary">sdhD</name>
    <name type="synonym">sdhC</name>
    <name type="ordered locus">VNG_1310G</name>
</gene>
<proteinExistence type="inferred from homology"/>
<protein>
    <recommendedName>
        <fullName>Succinate dehydrogenase hydrophobic membrane anchor subunit</fullName>
    </recommendedName>
</protein>